<gene>
    <name evidence="1" type="primary">hmgA</name>
    <name type="synonym">hgd</name>
    <name type="ordered locus">SCO1715</name>
    <name type="ORF">SCI11.04</name>
</gene>
<protein>
    <recommendedName>
        <fullName evidence="1">Homogentisate 1,2-dioxygenase</fullName>
        <shortName evidence="1">HGDO</shortName>
        <ecNumber evidence="1">1.13.11.5</ecNumber>
    </recommendedName>
    <alternativeName>
        <fullName evidence="1">Homogentisate oxygenase</fullName>
    </alternativeName>
    <alternativeName>
        <fullName evidence="1">Homogentisic acid oxidase</fullName>
    </alternativeName>
    <alternativeName>
        <fullName evidence="1">Homogentisicase</fullName>
    </alternativeName>
</protein>
<proteinExistence type="inferred from homology"/>
<organism>
    <name type="scientific">Streptomyces coelicolor (strain ATCC BAA-471 / A3(2) / M145)</name>
    <dbReference type="NCBI Taxonomy" id="100226"/>
    <lineage>
        <taxon>Bacteria</taxon>
        <taxon>Bacillati</taxon>
        <taxon>Actinomycetota</taxon>
        <taxon>Actinomycetes</taxon>
        <taxon>Kitasatosporales</taxon>
        <taxon>Streptomycetaceae</taxon>
        <taxon>Streptomyces</taxon>
        <taxon>Streptomyces albidoflavus group</taxon>
    </lineage>
</organism>
<dbReference type="EC" id="1.13.11.5" evidence="1"/>
<dbReference type="EMBL" id="AL939110">
    <property type="protein sequence ID" value="CAB50930.1"/>
    <property type="molecule type" value="Genomic_DNA"/>
</dbReference>
<dbReference type="PIR" id="T36737">
    <property type="entry name" value="T36737"/>
</dbReference>
<dbReference type="RefSeq" id="NP_625988.1">
    <property type="nucleotide sequence ID" value="NC_003888.3"/>
</dbReference>
<dbReference type="RefSeq" id="WP_003977111.1">
    <property type="nucleotide sequence ID" value="NZ_VNID01000018.1"/>
</dbReference>
<dbReference type="SMR" id="Q9S2B5"/>
<dbReference type="STRING" id="100226.gene:17759309"/>
<dbReference type="PaxDb" id="100226-SCO1715"/>
<dbReference type="GeneID" id="91387312"/>
<dbReference type="KEGG" id="sco:SCO1715"/>
<dbReference type="PATRIC" id="fig|100226.15.peg.1732"/>
<dbReference type="eggNOG" id="COG3508">
    <property type="taxonomic scope" value="Bacteria"/>
</dbReference>
<dbReference type="HOGENOM" id="CLU_027174_0_0_11"/>
<dbReference type="InParanoid" id="Q9S2B5"/>
<dbReference type="OrthoDB" id="9811253at2"/>
<dbReference type="PhylomeDB" id="Q9S2B5"/>
<dbReference type="UniPathway" id="UPA00139">
    <property type="reaction ID" value="UER00339"/>
</dbReference>
<dbReference type="Proteomes" id="UP000001973">
    <property type="component" value="Chromosome"/>
</dbReference>
<dbReference type="GO" id="GO:0004411">
    <property type="term" value="F:homogentisate 1,2-dioxygenase activity"/>
    <property type="evidence" value="ECO:0000318"/>
    <property type="project" value="GO_Central"/>
</dbReference>
<dbReference type="GO" id="GO:0005506">
    <property type="term" value="F:iron ion binding"/>
    <property type="evidence" value="ECO:0007669"/>
    <property type="project" value="UniProtKB-UniRule"/>
</dbReference>
<dbReference type="GO" id="GO:0006559">
    <property type="term" value="P:L-phenylalanine catabolic process"/>
    <property type="evidence" value="ECO:0000318"/>
    <property type="project" value="GO_Central"/>
</dbReference>
<dbReference type="GO" id="GO:0006572">
    <property type="term" value="P:tyrosine catabolic process"/>
    <property type="evidence" value="ECO:0007669"/>
    <property type="project" value="UniProtKB-UniRule"/>
</dbReference>
<dbReference type="CDD" id="cd07000">
    <property type="entry name" value="cupin_HGO_N"/>
    <property type="match status" value="1"/>
</dbReference>
<dbReference type="FunFam" id="2.60.120.10:FF:000036">
    <property type="entry name" value="Homogentisate 1,2-dioxygenase"/>
    <property type="match status" value="1"/>
</dbReference>
<dbReference type="Gene3D" id="2.60.120.10">
    <property type="entry name" value="Jelly Rolls"/>
    <property type="match status" value="1"/>
</dbReference>
<dbReference type="HAMAP" id="MF_00334">
    <property type="entry name" value="Homogentis_dioxygen"/>
    <property type="match status" value="1"/>
</dbReference>
<dbReference type="InterPro" id="IPR046451">
    <property type="entry name" value="HgmA_C"/>
</dbReference>
<dbReference type="InterPro" id="IPR046452">
    <property type="entry name" value="HgmA_N"/>
</dbReference>
<dbReference type="InterPro" id="IPR005708">
    <property type="entry name" value="Homogentis_dOase"/>
</dbReference>
<dbReference type="InterPro" id="IPR022950">
    <property type="entry name" value="Homogentis_dOase_bac"/>
</dbReference>
<dbReference type="InterPro" id="IPR014710">
    <property type="entry name" value="RmlC-like_jellyroll"/>
</dbReference>
<dbReference type="InterPro" id="IPR011051">
    <property type="entry name" value="RmlC_Cupin_sf"/>
</dbReference>
<dbReference type="NCBIfam" id="TIGR01015">
    <property type="entry name" value="hmgA"/>
    <property type="match status" value="1"/>
</dbReference>
<dbReference type="PANTHER" id="PTHR11056">
    <property type="entry name" value="HOMOGENTISATE 1,2-DIOXYGENASE"/>
    <property type="match status" value="1"/>
</dbReference>
<dbReference type="PANTHER" id="PTHR11056:SF0">
    <property type="entry name" value="HOMOGENTISATE 1,2-DIOXYGENASE"/>
    <property type="match status" value="1"/>
</dbReference>
<dbReference type="Pfam" id="PF04209">
    <property type="entry name" value="HgmA_C"/>
    <property type="match status" value="1"/>
</dbReference>
<dbReference type="Pfam" id="PF20510">
    <property type="entry name" value="HgmA_N"/>
    <property type="match status" value="1"/>
</dbReference>
<dbReference type="SUPFAM" id="SSF51182">
    <property type="entry name" value="RmlC-like cupins"/>
    <property type="match status" value="1"/>
</dbReference>
<accession>Q9S2B5</accession>
<name>HGD_STRCO</name>
<keyword id="KW-0223">Dioxygenase</keyword>
<keyword id="KW-0408">Iron</keyword>
<keyword id="KW-0479">Metal-binding</keyword>
<keyword id="KW-0560">Oxidoreductase</keyword>
<keyword id="KW-0585">Phenylalanine catabolism</keyword>
<keyword id="KW-1185">Reference proteome</keyword>
<keyword id="KW-0828">Tyrosine catabolism</keyword>
<sequence length="441" mass="48418">MSGDARKTAEGLAYLSGFGNEHASEAVAGALPEGRNSPQRAPLGLYAEQLSGTAFTEPRAHNRRSWLYRIRPSAAHPAFTRSGNGTIRTAPFNQAVPDPNRLRWNPLPVPGPATDFVEGLWTLGGNGDATQRTGMAVHLYHATASMDRVFSDADGELLIVPERGGLLLRTEFGLLHAEPGHVALIPRGVRFRVQLLDEDARGYVCENYGAPFQLPDLGPIGANGLANARDFRAPVAAYEDDESTPGPVEVVNKFCGNLWTAEYDHSPLDVVAWHGNHVPYVYDLRRFNVIGSISYDHPDPSIFTVLTSPSDTPGLAGVDFVVFAPRWLVGEDTFRPPYFHRNVMSEYMGLIEGAYDAKAEGFVPGGGSLHNMMSAHGPDRETFDRASAAELKPQRIDDGLAFMFETRWPVTLTPQAARAEHLQPGYDDVWQGLERHFRPLH</sequence>
<feature type="chain" id="PRO_0000220256" description="Homogentisate 1,2-dioxygenase">
    <location>
        <begin position="1"/>
        <end position="441"/>
    </location>
</feature>
<feature type="active site" description="Proton acceptor" evidence="1">
    <location>
        <position position="297"/>
    </location>
</feature>
<feature type="binding site" evidence="1">
    <location>
        <position position="340"/>
    </location>
    <ligand>
        <name>Fe cation</name>
        <dbReference type="ChEBI" id="CHEBI:24875"/>
    </ligand>
</feature>
<feature type="binding site" evidence="1">
    <location>
        <position position="346"/>
    </location>
    <ligand>
        <name>Fe cation</name>
        <dbReference type="ChEBI" id="CHEBI:24875"/>
    </ligand>
</feature>
<feature type="binding site" evidence="1">
    <location>
        <position position="355"/>
    </location>
    <ligand>
        <name>homogentisate</name>
        <dbReference type="ChEBI" id="CHEBI:16169"/>
    </ligand>
</feature>
<feature type="binding site" evidence="1">
    <location>
        <position position="376"/>
    </location>
    <ligand>
        <name>Fe cation</name>
        <dbReference type="ChEBI" id="CHEBI:24875"/>
    </ligand>
</feature>
<feature type="binding site" evidence="1">
    <location>
        <position position="376"/>
    </location>
    <ligand>
        <name>homogentisate</name>
        <dbReference type="ChEBI" id="CHEBI:16169"/>
    </ligand>
</feature>
<reference key="1">
    <citation type="journal article" date="2002" name="Nature">
        <title>Complete genome sequence of the model actinomycete Streptomyces coelicolor A3(2).</title>
        <authorList>
            <person name="Bentley S.D."/>
            <person name="Chater K.F."/>
            <person name="Cerdeno-Tarraga A.-M."/>
            <person name="Challis G.L."/>
            <person name="Thomson N.R."/>
            <person name="James K.D."/>
            <person name="Harris D.E."/>
            <person name="Quail M.A."/>
            <person name="Kieser H."/>
            <person name="Harper D."/>
            <person name="Bateman A."/>
            <person name="Brown S."/>
            <person name="Chandra G."/>
            <person name="Chen C.W."/>
            <person name="Collins M."/>
            <person name="Cronin A."/>
            <person name="Fraser A."/>
            <person name="Goble A."/>
            <person name="Hidalgo J."/>
            <person name="Hornsby T."/>
            <person name="Howarth S."/>
            <person name="Huang C.-H."/>
            <person name="Kieser T."/>
            <person name="Larke L."/>
            <person name="Murphy L.D."/>
            <person name="Oliver K."/>
            <person name="O'Neil S."/>
            <person name="Rabbinowitsch E."/>
            <person name="Rajandream M.A."/>
            <person name="Rutherford K.M."/>
            <person name="Rutter S."/>
            <person name="Seeger K."/>
            <person name="Saunders D."/>
            <person name="Sharp S."/>
            <person name="Squares R."/>
            <person name="Squares S."/>
            <person name="Taylor K."/>
            <person name="Warren T."/>
            <person name="Wietzorrek A."/>
            <person name="Woodward J.R."/>
            <person name="Barrell B.G."/>
            <person name="Parkhill J."/>
            <person name="Hopwood D.A."/>
        </authorList>
    </citation>
    <scope>NUCLEOTIDE SEQUENCE [LARGE SCALE GENOMIC DNA]</scope>
    <source>
        <strain>ATCC BAA-471 / A3(2) / M145</strain>
    </source>
</reference>
<evidence type="ECO:0000255" key="1">
    <source>
        <dbReference type="HAMAP-Rule" id="MF_00334"/>
    </source>
</evidence>
<comment type="function">
    <text evidence="1">Involved in the catabolism of homogentisate (2,5-dihydroxyphenylacetate or 2,5-OH-PhAc), a central intermediate in the degradation of phenylalanine and tyrosine. Catalyzes the oxidative ring cleavage of the aromatic ring of homogentisate to yield maleylacetoacetate.</text>
</comment>
<comment type="catalytic activity">
    <reaction evidence="1">
        <text>homogentisate + O2 = 4-maleylacetoacetate + H(+)</text>
        <dbReference type="Rhea" id="RHEA:15449"/>
        <dbReference type="ChEBI" id="CHEBI:15378"/>
        <dbReference type="ChEBI" id="CHEBI:15379"/>
        <dbReference type="ChEBI" id="CHEBI:16169"/>
        <dbReference type="ChEBI" id="CHEBI:17105"/>
        <dbReference type="EC" id="1.13.11.5"/>
    </reaction>
</comment>
<comment type="cofactor">
    <cofactor evidence="1">
        <name>Fe cation</name>
        <dbReference type="ChEBI" id="CHEBI:24875"/>
    </cofactor>
</comment>
<comment type="pathway">
    <text evidence="1">Amino-acid degradation; L-phenylalanine degradation; acetoacetate and fumarate from L-phenylalanine: step 4/6.</text>
</comment>
<comment type="subunit">
    <text evidence="1">Hexamer; dimer of trimers.</text>
</comment>
<comment type="similarity">
    <text evidence="1">Belongs to the homogentisate dioxygenase family.</text>
</comment>